<dbReference type="EMBL" id="AE008923">
    <property type="protein sequence ID" value="AAM35864.1"/>
    <property type="molecule type" value="Genomic_DNA"/>
</dbReference>
<dbReference type="RefSeq" id="WP_003486701.1">
    <property type="nucleotide sequence ID" value="NC_003919.1"/>
</dbReference>
<dbReference type="SMR" id="Q8PNR6"/>
<dbReference type="GeneID" id="97509345"/>
<dbReference type="KEGG" id="xac:XAC0981"/>
<dbReference type="eggNOG" id="COG0186">
    <property type="taxonomic scope" value="Bacteria"/>
</dbReference>
<dbReference type="HOGENOM" id="CLU_073626_1_1_6"/>
<dbReference type="Proteomes" id="UP000000576">
    <property type="component" value="Chromosome"/>
</dbReference>
<dbReference type="GO" id="GO:0022627">
    <property type="term" value="C:cytosolic small ribosomal subunit"/>
    <property type="evidence" value="ECO:0007669"/>
    <property type="project" value="TreeGrafter"/>
</dbReference>
<dbReference type="GO" id="GO:0019843">
    <property type="term" value="F:rRNA binding"/>
    <property type="evidence" value="ECO:0007669"/>
    <property type="project" value="UniProtKB-UniRule"/>
</dbReference>
<dbReference type="GO" id="GO:0003735">
    <property type="term" value="F:structural constituent of ribosome"/>
    <property type="evidence" value="ECO:0007669"/>
    <property type="project" value="InterPro"/>
</dbReference>
<dbReference type="GO" id="GO:0006412">
    <property type="term" value="P:translation"/>
    <property type="evidence" value="ECO:0007669"/>
    <property type="project" value="UniProtKB-UniRule"/>
</dbReference>
<dbReference type="CDD" id="cd00364">
    <property type="entry name" value="Ribosomal_uS17"/>
    <property type="match status" value="1"/>
</dbReference>
<dbReference type="FunFam" id="2.40.50.140:FF:000204">
    <property type="entry name" value="30S ribosomal protein S17"/>
    <property type="match status" value="1"/>
</dbReference>
<dbReference type="Gene3D" id="2.40.50.140">
    <property type="entry name" value="Nucleic acid-binding proteins"/>
    <property type="match status" value="1"/>
</dbReference>
<dbReference type="HAMAP" id="MF_01345_B">
    <property type="entry name" value="Ribosomal_uS17_B"/>
    <property type="match status" value="1"/>
</dbReference>
<dbReference type="InterPro" id="IPR012340">
    <property type="entry name" value="NA-bd_OB-fold"/>
</dbReference>
<dbReference type="InterPro" id="IPR000266">
    <property type="entry name" value="Ribosomal_uS17"/>
</dbReference>
<dbReference type="InterPro" id="IPR019984">
    <property type="entry name" value="Ribosomal_uS17_bact/chlr"/>
</dbReference>
<dbReference type="NCBIfam" id="NF004123">
    <property type="entry name" value="PRK05610.1"/>
    <property type="match status" value="1"/>
</dbReference>
<dbReference type="NCBIfam" id="TIGR03635">
    <property type="entry name" value="uS17_bact"/>
    <property type="match status" value="1"/>
</dbReference>
<dbReference type="PANTHER" id="PTHR10744">
    <property type="entry name" value="40S RIBOSOMAL PROTEIN S11 FAMILY MEMBER"/>
    <property type="match status" value="1"/>
</dbReference>
<dbReference type="PANTHER" id="PTHR10744:SF1">
    <property type="entry name" value="SMALL RIBOSOMAL SUBUNIT PROTEIN US17M"/>
    <property type="match status" value="1"/>
</dbReference>
<dbReference type="Pfam" id="PF00366">
    <property type="entry name" value="Ribosomal_S17"/>
    <property type="match status" value="1"/>
</dbReference>
<dbReference type="PRINTS" id="PR00973">
    <property type="entry name" value="RIBOSOMALS17"/>
</dbReference>
<dbReference type="SUPFAM" id="SSF50249">
    <property type="entry name" value="Nucleic acid-binding proteins"/>
    <property type="match status" value="1"/>
</dbReference>
<feature type="chain" id="PRO_0000233612" description="Small ribosomal subunit protein uS17">
    <location>
        <begin position="1"/>
        <end position="89"/>
    </location>
</feature>
<sequence>MSDNNEKQTLRTVEGRVVSNKMDKTVTVLVERQVKHALYGKYIKRSTKLHAHDADNACNEGDVVRVTEIAPMSKTKNWRVVEIVTRSAE</sequence>
<reference key="1">
    <citation type="journal article" date="2002" name="Nature">
        <title>Comparison of the genomes of two Xanthomonas pathogens with differing host specificities.</title>
        <authorList>
            <person name="da Silva A.C.R."/>
            <person name="Ferro J.A."/>
            <person name="Reinach F.C."/>
            <person name="Farah C.S."/>
            <person name="Furlan L.R."/>
            <person name="Quaggio R.B."/>
            <person name="Monteiro-Vitorello C.B."/>
            <person name="Van Sluys M.A."/>
            <person name="Almeida N.F. Jr."/>
            <person name="Alves L.M.C."/>
            <person name="do Amaral A.M."/>
            <person name="Bertolini M.C."/>
            <person name="Camargo L.E.A."/>
            <person name="Camarotte G."/>
            <person name="Cannavan F."/>
            <person name="Cardozo J."/>
            <person name="Chambergo F."/>
            <person name="Ciapina L.P."/>
            <person name="Cicarelli R.M.B."/>
            <person name="Coutinho L.L."/>
            <person name="Cursino-Santos J.R."/>
            <person name="El-Dorry H."/>
            <person name="Faria J.B."/>
            <person name="Ferreira A.J.S."/>
            <person name="Ferreira R.C.C."/>
            <person name="Ferro M.I.T."/>
            <person name="Formighieri E.F."/>
            <person name="Franco M.C."/>
            <person name="Greggio C.C."/>
            <person name="Gruber A."/>
            <person name="Katsuyama A.M."/>
            <person name="Kishi L.T."/>
            <person name="Leite R.P."/>
            <person name="Lemos E.G.M."/>
            <person name="Lemos M.V.F."/>
            <person name="Locali E.C."/>
            <person name="Machado M.A."/>
            <person name="Madeira A.M.B.N."/>
            <person name="Martinez-Rossi N.M."/>
            <person name="Martins E.C."/>
            <person name="Meidanis J."/>
            <person name="Menck C.F.M."/>
            <person name="Miyaki C.Y."/>
            <person name="Moon D.H."/>
            <person name="Moreira L.M."/>
            <person name="Novo M.T.M."/>
            <person name="Okura V.K."/>
            <person name="Oliveira M.C."/>
            <person name="Oliveira V.R."/>
            <person name="Pereira H.A."/>
            <person name="Rossi A."/>
            <person name="Sena J.A.D."/>
            <person name="Silva C."/>
            <person name="de Souza R.F."/>
            <person name="Spinola L.A.F."/>
            <person name="Takita M.A."/>
            <person name="Tamura R.E."/>
            <person name="Teixeira E.C."/>
            <person name="Tezza R.I.D."/>
            <person name="Trindade dos Santos M."/>
            <person name="Truffi D."/>
            <person name="Tsai S.M."/>
            <person name="White F.F."/>
            <person name="Setubal J.C."/>
            <person name="Kitajima J.P."/>
        </authorList>
    </citation>
    <scope>NUCLEOTIDE SEQUENCE [LARGE SCALE GENOMIC DNA]</scope>
    <source>
        <strain>306</strain>
    </source>
</reference>
<gene>
    <name evidence="1" type="primary">rpsQ</name>
    <name type="ordered locus">XAC0981</name>
</gene>
<protein>
    <recommendedName>
        <fullName evidence="1">Small ribosomal subunit protein uS17</fullName>
    </recommendedName>
    <alternativeName>
        <fullName evidence="2">30S ribosomal protein S17</fullName>
    </alternativeName>
</protein>
<proteinExistence type="inferred from homology"/>
<comment type="function">
    <text evidence="1">One of the primary rRNA binding proteins, it binds specifically to the 5'-end of 16S ribosomal RNA.</text>
</comment>
<comment type="subunit">
    <text evidence="1">Part of the 30S ribosomal subunit.</text>
</comment>
<comment type="similarity">
    <text evidence="1">Belongs to the universal ribosomal protein uS17 family.</text>
</comment>
<evidence type="ECO:0000255" key="1">
    <source>
        <dbReference type="HAMAP-Rule" id="MF_01345"/>
    </source>
</evidence>
<evidence type="ECO:0000305" key="2"/>
<accession>Q8PNR6</accession>
<name>RS17_XANAC</name>
<keyword id="KW-0687">Ribonucleoprotein</keyword>
<keyword id="KW-0689">Ribosomal protein</keyword>
<keyword id="KW-0694">RNA-binding</keyword>
<keyword id="KW-0699">rRNA-binding</keyword>
<organism>
    <name type="scientific">Xanthomonas axonopodis pv. citri (strain 306)</name>
    <dbReference type="NCBI Taxonomy" id="190486"/>
    <lineage>
        <taxon>Bacteria</taxon>
        <taxon>Pseudomonadati</taxon>
        <taxon>Pseudomonadota</taxon>
        <taxon>Gammaproteobacteria</taxon>
        <taxon>Lysobacterales</taxon>
        <taxon>Lysobacteraceae</taxon>
        <taxon>Xanthomonas</taxon>
    </lineage>
</organism>